<keyword id="KW-0029">Amino-acid transport</keyword>
<keyword id="KW-0997">Cell inner membrane</keyword>
<keyword id="KW-1003">Cell membrane</keyword>
<keyword id="KW-0472">Membrane</keyword>
<keyword id="KW-0769">Symport</keyword>
<keyword id="KW-0812">Transmembrane</keyword>
<keyword id="KW-1133">Transmembrane helix</keyword>
<keyword id="KW-0813">Transport</keyword>
<reference key="1">
    <citation type="submission" date="2006-12" db="EMBL/GenBank/DDBJ databases">
        <authorList>
            <person name="Fouts D.E."/>
            <person name="Nelson K.E."/>
            <person name="Sebastian Y."/>
        </authorList>
    </citation>
    <scope>NUCLEOTIDE SEQUENCE [LARGE SCALE GENOMIC DNA]</scope>
    <source>
        <strain>81-176</strain>
    </source>
</reference>
<feature type="chain" id="PRO_0000309079" description="Serine/threonine transporter SstT">
    <location>
        <begin position="1"/>
        <end position="407"/>
    </location>
</feature>
<feature type="transmembrane region" description="Helical" evidence="1">
    <location>
        <begin position="12"/>
        <end position="32"/>
    </location>
</feature>
<feature type="transmembrane region" description="Helical" evidence="1">
    <location>
        <begin position="42"/>
        <end position="62"/>
    </location>
</feature>
<feature type="transmembrane region" description="Helical" evidence="1">
    <location>
        <begin position="81"/>
        <end position="101"/>
    </location>
</feature>
<feature type="transmembrane region" description="Helical" evidence="1">
    <location>
        <begin position="141"/>
        <end position="161"/>
    </location>
</feature>
<feature type="transmembrane region" description="Helical" evidence="1">
    <location>
        <begin position="179"/>
        <end position="199"/>
    </location>
</feature>
<feature type="transmembrane region" description="Helical" evidence="1">
    <location>
        <begin position="218"/>
        <end position="238"/>
    </location>
</feature>
<feature type="transmembrane region" description="Helical" evidence="1">
    <location>
        <begin position="245"/>
        <end position="267"/>
    </location>
</feature>
<feature type="transmembrane region" description="Helical" evidence="1">
    <location>
        <begin position="288"/>
        <end position="308"/>
    </location>
</feature>
<feature type="transmembrane region" description="Helical" evidence="1">
    <location>
        <begin position="330"/>
        <end position="350"/>
    </location>
</feature>
<gene>
    <name evidence="1" type="primary">sstT</name>
    <name type="ordered locus">CJJ81176_1115</name>
</gene>
<evidence type="ECO:0000255" key="1">
    <source>
        <dbReference type="HAMAP-Rule" id="MF_01582"/>
    </source>
</evidence>
<organism>
    <name type="scientific">Campylobacter jejuni subsp. jejuni serotype O:23/36 (strain 81-176)</name>
    <dbReference type="NCBI Taxonomy" id="354242"/>
    <lineage>
        <taxon>Bacteria</taxon>
        <taxon>Pseudomonadati</taxon>
        <taxon>Campylobacterota</taxon>
        <taxon>Epsilonproteobacteria</taxon>
        <taxon>Campylobacterales</taxon>
        <taxon>Campylobacteraceae</taxon>
        <taxon>Campylobacter</taxon>
    </lineage>
</organism>
<accession>A1W084</accession>
<comment type="function">
    <text evidence="1">Involved in the import of serine and threonine into the cell, with the concomitant import of sodium (symport system).</text>
</comment>
<comment type="catalytic activity">
    <reaction evidence="1">
        <text>L-serine(in) + Na(+)(in) = L-serine(out) + Na(+)(out)</text>
        <dbReference type="Rhea" id="RHEA:29575"/>
        <dbReference type="ChEBI" id="CHEBI:29101"/>
        <dbReference type="ChEBI" id="CHEBI:33384"/>
    </reaction>
    <physiologicalReaction direction="right-to-left" evidence="1">
        <dbReference type="Rhea" id="RHEA:29577"/>
    </physiologicalReaction>
</comment>
<comment type="catalytic activity">
    <reaction evidence="1">
        <text>L-threonine(in) + Na(+)(in) = L-threonine(out) + Na(+)(out)</text>
        <dbReference type="Rhea" id="RHEA:69999"/>
        <dbReference type="ChEBI" id="CHEBI:29101"/>
        <dbReference type="ChEBI" id="CHEBI:57926"/>
    </reaction>
    <physiologicalReaction direction="right-to-left" evidence="1">
        <dbReference type="Rhea" id="RHEA:70001"/>
    </physiologicalReaction>
</comment>
<comment type="subcellular location">
    <subcellularLocation>
        <location evidence="1">Cell inner membrane</location>
        <topology evidence="1">Multi-pass membrane protein</topology>
    </subcellularLocation>
</comment>
<comment type="similarity">
    <text evidence="1">Belongs to the dicarboxylate/amino acid:cation symporter (DAACS) (TC 2.A.23) family.</text>
</comment>
<name>SSTT_CAMJJ</name>
<sequence>MFSKIIQSYAKGNLIVQICIGIVLGILIGISSKEISEIANLLGILFTSALKAIAPMLVFILILTSICTKDFSQSGAKIKNIIILYIVGTFLASACAVLANFFFPVKLVLDGVQTATNSSPTHMSEIFKDLLFKIVDNPINALSSGNYLGILTWAIAGGIALKHCSNEAKQVFIDINEGVLKIVKFIVKLAPFGIFGLVANSVAQTGAQGLLSYVKLLILLVATMLFVTFVINALIVFFYTRKNPFPLIFICLRHSAFFAFFTRSSAANIPVNMALCAKLGIDKEFYGISIPLGATINMAGAAVTIAILSLTAANTVGIEISLLQAFLLSIIATFAACGASGVAGGSLLLIPLACSLFNIDYDIAMKVVAIGFIIGVIQDSVETALNSSTDVLFTAICSKNELNYNIK</sequence>
<proteinExistence type="inferred from homology"/>
<protein>
    <recommendedName>
        <fullName evidence="1">Serine/threonine transporter SstT</fullName>
    </recommendedName>
    <alternativeName>
        <fullName evidence="1">Na(+)/serine-threonine symporter</fullName>
    </alternativeName>
</protein>
<dbReference type="EMBL" id="CP000538">
    <property type="protein sequence ID" value="EAQ72158.1"/>
    <property type="molecule type" value="Genomic_DNA"/>
</dbReference>
<dbReference type="RefSeq" id="WP_002856259.1">
    <property type="nucleotide sequence ID" value="NC_008787.1"/>
</dbReference>
<dbReference type="SMR" id="A1W084"/>
<dbReference type="KEGG" id="cjj:CJJ81176_1115"/>
<dbReference type="eggNOG" id="COG3633">
    <property type="taxonomic scope" value="Bacteria"/>
</dbReference>
<dbReference type="HOGENOM" id="CLU_044581_0_0_7"/>
<dbReference type="Proteomes" id="UP000000646">
    <property type="component" value="Chromosome"/>
</dbReference>
<dbReference type="GO" id="GO:0005886">
    <property type="term" value="C:plasma membrane"/>
    <property type="evidence" value="ECO:0007669"/>
    <property type="project" value="UniProtKB-SubCell"/>
</dbReference>
<dbReference type="GO" id="GO:0005295">
    <property type="term" value="F:neutral L-amino acid:sodium symporter activity"/>
    <property type="evidence" value="ECO:0007669"/>
    <property type="project" value="TreeGrafter"/>
</dbReference>
<dbReference type="GO" id="GO:0032329">
    <property type="term" value="P:serine transport"/>
    <property type="evidence" value="ECO:0007669"/>
    <property type="project" value="InterPro"/>
</dbReference>
<dbReference type="GO" id="GO:0015826">
    <property type="term" value="P:threonine transport"/>
    <property type="evidence" value="ECO:0007669"/>
    <property type="project" value="InterPro"/>
</dbReference>
<dbReference type="Gene3D" id="1.10.3860.10">
    <property type="entry name" value="Sodium:dicarboxylate symporter"/>
    <property type="match status" value="1"/>
</dbReference>
<dbReference type="HAMAP" id="MF_01582">
    <property type="entry name" value="Ser_Thr_transp_SstT"/>
    <property type="match status" value="1"/>
</dbReference>
<dbReference type="InterPro" id="IPR001991">
    <property type="entry name" value="Na-dicarboxylate_symporter"/>
</dbReference>
<dbReference type="InterPro" id="IPR036458">
    <property type="entry name" value="Na:dicarbo_symporter_sf"/>
</dbReference>
<dbReference type="InterPro" id="IPR023025">
    <property type="entry name" value="Ser_Thr_transp_SstT"/>
</dbReference>
<dbReference type="NCBIfam" id="NF010151">
    <property type="entry name" value="PRK13628.1"/>
    <property type="match status" value="1"/>
</dbReference>
<dbReference type="PANTHER" id="PTHR42865">
    <property type="entry name" value="PROTON/GLUTAMATE-ASPARTATE SYMPORTER"/>
    <property type="match status" value="1"/>
</dbReference>
<dbReference type="PANTHER" id="PTHR42865:SF8">
    <property type="entry name" value="SERINE_THREONINE TRANSPORTER SSTT"/>
    <property type="match status" value="1"/>
</dbReference>
<dbReference type="Pfam" id="PF00375">
    <property type="entry name" value="SDF"/>
    <property type="match status" value="1"/>
</dbReference>
<dbReference type="PRINTS" id="PR00173">
    <property type="entry name" value="EDTRNSPORT"/>
</dbReference>
<dbReference type="SUPFAM" id="SSF118215">
    <property type="entry name" value="Proton glutamate symport protein"/>
    <property type="match status" value="1"/>
</dbReference>